<proteinExistence type="evidence at protein level"/>
<comment type="subcellular location">
    <subcellularLocation>
        <location evidence="4">Membrane</location>
        <topology evidence="4">Single-pass membrane protein</topology>
    </subcellularLocation>
</comment>
<comment type="similarity">
    <text evidence="4">Belongs to the arrestin family.</text>
</comment>
<feature type="chain" id="PRO_0000116393" description="Arrestin domain-containing protein C31A2.12">
    <location>
        <begin position="1"/>
        <end position="596"/>
    </location>
</feature>
<feature type="transmembrane region" description="Helical" evidence="1">
    <location>
        <begin position="194"/>
        <end position="211"/>
    </location>
</feature>
<feature type="region of interest" description="Disordered" evidence="2">
    <location>
        <begin position="363"/>
        <end position="387"/>
    </location>
</feature>
<feature type="region of interest" description="Disordered" evidence="2">
    <location>
        <begin position="405"/>
        <end position="446"/>
    </location>
</feature>
<feature type="region of interest" description="Disordered" evidence="2">
    <location>
        <begin position="493"/>
        <end position="596"/>
    </location>
</feature>
<feature type="compositionally biased region" description="Polar residues" evidence="2">
    <location>
        <begin position="405"/>
        <end position="420"/>
    </location>
</feature>
<feature type="compositionally biased region" description="Polar residues" evidence="2">
    <location>
        <begin position="430"/>
        <end position="446"/>
    </location>
</feature>
<feature type="compositionally biased region" description="Polar residues" evidence="2">
    <location>
        <begin position="504"/>
        <end position="522"/>
    </location>
</feature>
<feature type="compositionally biased region" description="Low complexity" evidence="2">
    <location>
        <begin position="531"/>
        <end position="555"/>
    </location>
</feature>
<feature type="modified residue" description="Phosphothreonine" evidence="3">
    <location>
        <position position="373"/>
    </location>
</feature>
<feature type="modified residue" description="Phosphothreonine" evidence="3">
    <location>
        <position position="374"/>
    </location>
</feature>
<feature type="modified residue" description="Phosphoserine" evidence="3">
    <location>
        <position position="452"/>
    </location>
</feature>
<feature type="modified residue" description="Phosphoserine" evidence="3">
    <location>
        <position position="474"/>
    </location>
</feature>
<feature type="modified residue" description="Phosphoserine" evidence="3">
    <location>
        <position position="493"/>
    </location>
</feature>
<feature type="modified residue" description="Phosphoserine" evidence="3">
    <location>
        <position position="497"/>
    </location>
</feature>
<feature type="modified residue" description="Phosphothreonine" evidence="3">
    <location>
        <position position="502"/>
    </location>
</feature>
<feature type="modified residue" description="Phosphothreonine" evidence="3">
    <location>
        <position position="507"/>
    </location>
</feature>
<feature type="modified residue" description="Phosphoserine" evidence="3">
    <location>
        <position position="514"/>
    </location>
</feature>
<gene>
    <name type="ORF">SPAC31A2.12</name>
</gene>
<accession>Q09729</accession>
<organism>
    <name type="scientific">Schizosaccharomyces pombe (strain 972 / ATCC 24843)</name>
    <name type="common">Fission yeast</name>
    <dbReference type="NCBI Taxonomy" id="284812"/>
    <lineage>
        <taxon>Eukaryota</taxon>
        <taxon>Fungi</taxon>
        <taxon>Dikarya</taxon>
        <taxon>Ascomycota</taxon>
        <taxon>Taphrinomycotina</taxon>
        <taxon>Schizosaccharomycetes</taxon>
        <taxon>Schizosaccharomycetales</taxon>
        <taxon>Schizosaccharomycetaceae</taxon>
        <taxon>Schizosaccharomyces</taxon>
    </lineage>
</organism>
<dbReference type="EMBL" id="CU329670">
    <property type="protein sequence ID" value="CAA90470.1"/>
    <property type="molecule type" value="Genomic_DNA"/>
</dbReference>
<dbReference type="PIR" id="T38610">
    <property type="entry name" value="S58106"/>
</dbReference>
<dbReference type="BioGRID" id="279381">
    <property type="interactions" value="49"/>
</dbReference>
<dbReference type="FunCoup" id="Q09729">
    <property type="interactions" value="93"/>
</dbReference>
<dbReference type="STRING" id="284812.Q09729"/>
<dbReference type="iPTMnet" id="Q09729"/>
<dbReference type="SwissPalm" id="Q09729"/>
<dbReference type="PaxDb" id="4896-SPAC31A2.12.1"/>
<dbReference type="EnsemblFungi" id="SPAC31A2.12.1">
    <property type="protein sequence ID" value="SPAC31A2.12.1:pep"/>
    <property type="gene ID" value="SPAC31A2.12"/>
</dbReference>
<dbReference type="KEGG" id="spo:2542940"/>
<dbReference type="PomBase" id="SPAC31A2.12"/>
<dbReference type="VEuPathDB" id="FungiDB:SPAC31A2.12"/>
<dbReference type="eggNOG" id="KOG3780">
    <property type="taxonomic scope" value="Eukaryota"/>
</dbReference>
<dbReference type="HOGENOM" id="CLU_018982_2_0_1"/>
<dbReference type="InParanoid" id="Q09729"/>
<dbReference type="OMA" id="GMATPFH"/>
<dbReference type="PhylomeDB" id="Q09729"/>
<dbReference type="Reactome" id="R-SPO-844456">
    <property type="pathway name" value="The NLRP3 inflammasome"/>
</dbReference>
<dbReference type="PRO" id="PR:Q09729"/>
<dbReference type="Proteomes" id="UP000002485">
    <property type="component" value="Chromosome I"/>
</dbReference>
<dbReference type="GO" id="GO:0005737">
    <property type="term" value="C:cytoplasm"/>
    <property type="evidence" value="ECO:0000318"/>
    <property type="project" value="GO_Central"/>
</dbReference>
<dbReference type="GO" id="GO:0005829">
    <property type="term" value="C:cytosol"/>
    <property type="evidence" value="ECO:0007005"/>
    <property type="project" value="PomBase"/>
</dbReference>
<dbReference type="GO" id="GO:0005886">
    <property type="term" value="C:plasma membrane"/>
    <property type="evidence" value="ECO:0000318"/>
    <property type="project" value="GO_Central"/>
</dbReference>
<dbReference type="GO" id="GO:0005509">
    <property type="term" value="F:calcium ion binding"/>
    <property type="evidence" value="ECO:0000255"/>
    <property type="project" value="PomBase"/>
</dbReference>
<dbReference type="GO" id="GO:0030674">
    <property type="term" value="F:protein-macromolecule adaptor activity"/>
    <property type="evidence" value="ECO:0000318"/>
    <property type="project" value="GO_Central"/>
</dbReference>
<dbReference type="GO" id="GO:0031625">
    <property type="term" value="F:ubiquitin protein ligase binding"/>
    <property type="evidence" value="ECO:0000318"/>
    <property type="project" value="GO_Central"/>
</dbReference>
<dbReference type="GO" id="GO:0072583">
    <property type="term" value="P:clathrin-dependent endocytosis"/>
    <property type="evidence" value="ECO:0000266"/>
    <property type="project" value="PomBase"/>
</dbReference>
<dbReference type="GO" id="GO:0070086">
    <property type="term" value="P:ubiquitin-dependent endocytosis"/>
    <property type="evidence" value="ECO:0000318"/>
    <property type="project" value="GO_Central"/>
</dbReference>
<dbReference type="Gene3D" id="2.60.40.640">
    <property type="match status" value="2"/>
</dbReference>
<dbReference type="InterPro" id="IPR014752">
    <property type="entry name" value="Arrestin-like_C"/>
</dbReference>
<dbReference type="InterPro" id="IPR011021">
    <property type="entry name" value="Arrestin-like_N"/>
</dbReference>
<dbReference type="InterPro" id="IPR011022">
    <property type="entry name" value="Arrestin_C-like"/>
</dbReference>
<dbReference type="InterPro" id="IPR050357">
    <property type="entry name" value="Arrestin_domain-protein"/>
</dbReference>
<dbReference type="InterPro" id="IPR014756">
    <property type="entry name" value="Ig_E-set"/>
</dbReference>
<dbReference type="PANTHER" id="PTHR11188">
    <property type="entry name" value="ARRESTIN DOMAIN CONTAINING PROTEIN"/>
    <property type="match status" value="1"/>
</dbReference>
<dbReference type="PANTHER" id="PTHR11188:SF170">
    <property type="entry name" value="ARRESTIN DOMAIN-CONTAINING PROTEIN C31A2.12"/>
    <property type="match status" value="1"/>
</dbReference>
<dbReference type="Pfam" id="PF02752">
    <property type="entry name" value="Arrestin_C"/>
    <property type="match status" value="1"/>
</dbReference>
<dbReference type="Pfam" id="PF00339">
    <property type="entry name" value="Arrestin_N"/>
    <property type="match status" value="1"/>
</dbReference>
<dbReference type="SMART" id="SM01017">
    <property type="entry name" value="Arrestin_C"/>
    <property type="match status" value="1"/>
</dbReference>
<dbReference type="SUPFAM" id="SSF81296">
    <property type="entry name" value="E set domains"/>
    <property type="match status" value="1"/>
</dbReference>
<reference key="1">
    <citation type="journal article" date="2002" name="Nature">
        <title>The genome sequence of Schizosaccharomyces pombe.</title>
        <authorList>
            <person name="Wood V."/>
            <person name="Gwilliam R."/>
            <person name="Rajandream M.A."/>
            <person name="Lyne M.H."/>
            <person name="Lyne R."/>
            <person name="Stewart A."/>
            <person name="Sgouros J.G."/>
            <person name="Peat N."/>
            <person name="Hayles J."/>
            <person name="Baker S.G."/>
            <person name="Basham D."/>
            <person name="Bowman S."/>
            <person name="Brooks K."/>
            <person name="Brown D."/>
            <person name="Brown S."/>
            <person name="Chillingworth T."/>
            <person name="Churcher C.M."/>
            <person name="Collins M."/>
            <person name="Connor R."/>
            <person name="Cronin A."/>
            <person name="Davis P."/>
            <person name="Feltwell T."/>
            <person name="Fraser A."/>
            <person name="Gentles S."/>
            <person name="Goble A."/>
            <person name="Hamlin N."/>
            <person name="Harris D.E."/>
            <person name="Hidalgo J."/>
            <person name="Hodgson G."/>
            <person name="Holroyd S."/>
            <person name="Hornsby T."/>
            <person name="Howarth S."/>
            <person name="Huckle E.J."/>
            <person name="Hunt S."/>
            <person name="Jagels K."/>
            <person name="James K.D."/>
            <person name="Jones L."/>
            <person name="Jones M."/>
            <person name="Leather S."/>
            <person name="McDonald S."/>
            <person name="McLean J."/>
            <person name="Mooney P."/>
            <person name="Moule S."/>
            <person name="Mungall K.L."/>
            <person name="Murphy L.D."/>
            <person name="Niblett D."/>
            <person name="Odell C."/>
            <person name="Oliver K."/>
            <person name="O'Neil S."/>
            <person name="Pearson D."/>
            <person name="Quail M.A."/>
            <person name="Rabbinowitsch E."/>
            <person name="Rutherford K.M."/>
            <person name="Rutter S."/>
            <person name="Saunders D."/>
            <person name="Seeger K."/>
            <person name="Sharp S."/>
            <person name="Skelton J."/>
            <person name="Simmonds M.N."/>
            <person name="Squares R."/>
            <person name="Squares S."/>
            <person name="Stevens K."/>
            <person name="Taylor K."/>
            <person name="Taylor R.G."/>
            <person name="Tivey A."/>
            <person name="Walsh S.V."/>
            <person name="Warren T."/>
            <person name="Whitehead S."/>
            <person name="Woodward J.R."/>
            <person name="Volckaert G."/>
            <person name="Aert R."/>
            <person name="Robben J."/>
            <person name="Grymonprez B."/>
            <person name="Weltjens I."/>
            <person name="Vanstreels E."/>
            <person name="Rieger M."/>
            <person name="Schaefer M."/>
            <person name="Mueller-Auer S."/>
            <person name="Gabel C."/>
            <person name="Fuchs M."/>
            <person name="Duesterhoeft A."/>
            <person name="Fritzc C."/>
            <person name="Holzer E."/>
            <person name="Moestl D."/>
            <person name="Hilbert H."/>
            <person name="Borzym K."/>
            <person name="Langer I."/>
            <person name="Beck A."/>
            <person name="Lehrach H."/>
            <person name="Reinhardt R."/>
            <person name="Pohl T.M."/>
            <person name="Eger P."/>
            <person name="Zimmermann W."/>
            <person name="Wedler H."/>
            <person name="Wambutt R."/>
            <person name="Purnelle B."/>
            <person name="Goffeau A."/>
            <person name="Cadieu E."/>
            <person name="Dreano S."/>
            <person name="Gloux S."/>
            <person name="Lelaure V."/>
            <person name="Mottier S."/>
            <person name="Galibert F."/>
            <person name="Aves S.J."/>
            <person name="Xiang Z."/>
            <person name="Hunt C."/>
            <person name="Moore K."/>
            <person name="Hurst S.M."/>
            <person name="Lucas M."/>
            <person name="Rochet M."/>
            <person name="Gaillardin C."/>
            <person name="Tallada V.A."/>
            <person name="Garzon A."/>
            <person name="Thode G."/>
            <person name="Daga R.R."/>
            <person name="Cruzado L."/>
            <person name="Jimenez J."/>
            <person name="Sanchez M."/>
            <person name="del Rey F."/>
            <person name="Benito J."/>
            <person name="Dominguez A."/>
            <person name="Revuelta J.L."/>
            <person name="Moreno S."/>
            <person name="Armstrong J."/>
            <person name="Forsburg S.L."/>
            <person name="Cerutti L."/>
            <person name="Lowe T."/>
            <person name="McCombie W.R."/>
            <person name="Paulsen I."/>
            <person name="Potashkin J."/>
            <person name="Shpakovski G.V."/>
            <person name="Ussery D."/>
            <person name="Barrell B.G."/>
            <person name="Nurse P."/>
        </authorList>
    </citation>
    <scope>NUCLEOTIDE SEQUENCE [LARGE SCALE GENOMIC DNA]</scope>
    <source>
        <strain>972 / ATCC 24843</strain>
    </source>
</reference>
<reference key="2">
    <citation type="journal article" date="2008" name="J. Proteome Res.">
        <title>Phosphoproteome analysis of fission yeast.</title>
        <authorList>
            <person name="Wilson-Grady J.T."/>
            <person name="Villen J."/>
            <person name="Gygi S.P."/>
        </authorList>
    </citation>
    <scope>PHOSPHORYLATION [LARGE SCALE ANALYSIS] AT THR-373; THR-374; SER-452; SER-474; SER-493; SER-497; THR-502; THR-507 AND SER-514</scope>
    <scope>IDENTIFICATION BY MASS SPECTROMETRY</scope>
</reference>
<sequence>MNILSRKENVASYFDIRVAAEHDLIVIQGLADSAEPTPLSGSVVLCLNEAISVKAISLKLVGKCRISWSEPSPTVRGGQRHNKQEYVVYEKNWIFVPYTGANRTLRAGNYEYPFHVMLPGDIAESVEGLQSCYVVYRLKASIDRTGLASKMVKKKHIRLIRALPADAIEYTQTISVDNTWPNKIEYTISVPTKAYAIGSYIPIHFVLVPLLKRLTIGKISITLKEYITLHVAHGYNGLPASKDEVRTVRSLQTEELEEFSDHYELTKNLELPSSLVECLQDCDLDGIKIRHKLKFSVSLRNPDGHISELRAALPVVLMIPPQLFGDRAEVESLRENFESFNQPLPSYQNSMYDRLYDGLSYSNLDTPLPSGATTPRRRDSMEPTYASNEAHRRQLIAGLTELALQQQPQGRSPNEHSPSNHPEDFPPSFSLGSNPSSGAASAVITRNPSETSLADLSRVPSYKEATRSAVPLESPLQSTLPSYEDVARIEHLSRPPSPGIVTPPQRTSPSFFVSPTESTRQSLDSRRSFEHSTSSSSGISPSHSSASLAHLSQASNPNGSSSAPHRPTSARVGSHRNALDALRRARMLPSGFSRRN</sequence>
<evidence type="ECO:0000255" key="1"/>
<evidence type="ECO:0000256" key="2">
    <source>
        <dbReference type="SAM" id="MobiDB-lite"/>
    </source>
</evidence>
<evidence type="ECO:0000269" key="3">
    <source>
    </source>
</evidence>
<evidence type="ECO:0000305" key="4"/>
<protein>
    <recommendedName>
        <fullName>Arrestin domain-containing protein C31A2.12</fullName>
    </recommendedName>
</protein>
<name>YA4C_SCHPO</name>
<keyword id="KW-0472">Membrane</keyword>
<keyword id="KW-0597">Phosphoprotein</keyword>
<keyword id="KW-1185">Reference proteome</keyword>
<keyword id="KW-0812">Transmembrane</keyword>
<keyword id="KW-1133">Transmembrane helix</keyword>